<gene>
    <name evidence="1" type="primary">RPS1</name>
    <name type="ORF">POSPLDRAFT_115875</name>
</gene>
<protein>
    <recommendedName>
        <fullName evidence="1">Small ribosomal subunit protein eS1</fullName>
    </recommendedName>
    <alternativeName>
        <fullName evidence="2">40S ribosomal protein S1</fullName>
    </alternativeName>
</protein>
<dbReference type="EMBL" id="EQ966387">
    <property type="protein sequence ID" value="EED79317.1"/>
    <property type="molecule type" value="Genomic_DNA"/>
</dbReference>
<dbReference type="RefSeq" id="XP_002475466.1">
    <property type="nucleotide sequence ID" value="XM_002475421.1"/>
</dbReference>
<dbReference type="SMR" id="B8PIG4"/>
<dbReference type="FunCoup" id="B8PIG4">
    <property type="interactions" value="247"/>
</dbReference>
<dbReference type="STRING" id="561896.B8PIG4"/>
<dbReference type="KEGG" id="ppl:POSPLDRAFT_115875"/>
<dbReference type="HOGENOM" id="CLU_062507_0_0_1"/>
<dbReference type="InParanoid" id="B8PIG4"/>
<dbReference type="OMA" id="TRFKGHE"/>
<dbReference type="OrthoDB" id="9834376at2759"/>
<dbReference type="GO" id="GO:0022627">
    <property type="term" value="C:cytosolic small ribosomal subunit"/>
    <property type="evidence" value="ECO:0007669"/>
    <property type="project" value="UniProtKB-UniRule"/>
</dbReference>
<dbReference type="GO" id="GO:0003735">
    <property type="term" value="F:structural constituent of ribosome"/>
    <property type="evidence" value="ECO:0007669"/>
    <property type="project" value="UniProtKB-UniRule"/>
</dbReference>
<dbReference type="GO" id="GO:0006412">
    <property type="term" value="P:translation"/>
    <property type="evidence" value="ECO:0007669"/>
    <property type="project" value="UniProtKB-UniRule"/>
</dbReference>
<dbReference type="HAMAP" id="MF_03122">
    <property type="entry name" value="Ribosomal_eS1_euk"/>
    <property type="match status" value="1"/>
</dbReference>
<dbReference type="InterPro" id="IPR001593">
    <property type="entry name" value="Ribosomal_eS1"/>
</dbReference>
<dbReference type="InterPro" id="IPR018281">
    <property type="entry name" value="Ribosomal_eS1_CS"/>
</dbReference>
<dbReference type="InterPro" id="IPR027500">
    <property type="entry name" value="Ribosomal_eS1_euk"/>
</dbReference>
<dbReference type="PANTHER" id="PTHR11830">
    <property type="entry name" value="40S RIBOSOMAL PROTEIN S3A"/>
    <property type="match status" value="1"/>
</dbReference>
<dbReference type="Pfam" id="PF01015">
    <property type="entry name" value="Ribosomal_S3Ae"/>
    <property type="match status" value="1"/>
</dbReference>
<dbReference type="SMART" id="SM01397">
    <property type="entry name" value="Ribosomal_S3Ae"/>
    <property type="match status" value="1"/>
</dbReference>
<dbReference type="PROSITE" id="PS01191">
    <property type="entry name" value="RIBOSOMAL_S3AE"/>
    <property type="match status" value="1"/>
</dbReference>
<feature type="initiator methionine" description="Removed" evidence="1">
    <location>
        <position position="1"/>
    </location>
</feature>
<feature type="chain" id="PRO_0000389402" description="Small ribosomal subunit protein eS1">
    <location>
        <begin position="2"/>
        <end position="256"/>
    </location>
</feature>
<feature type="modified residue" description="N-acetylalanine; partial" evidence="1">
    <location>
        <position position="2"/>
    </location>
</feature>
<sequence length="256" mass="29356">MAVGKNKRLSKGKKGIKKKVVDPFTRKDWYDIKAPSIFEKRNVGKTLVNRSSGLKNANDSLKGRIVEISLADLNNDEEQAFRKIKLRIDEVQGKNCLTNFHGMSFSSDKLRSLVRKWQTLIEAHVDVKTTDGYLLRLFAIGFTKRRPTQVRKTTYAQSSQIRQIRQKMFEIMTREASSCDLKELVQKFIPEAIGREIEKAARGIYPLQNVFVHKAKILKAPKFDMSKLLELHGESTDETGTRVVKDFKEPEILESV</sequence>
<name>RS3A_POSPM</name>
<reference key="1">
    <citation type="journal article" date="2009" name="Proc. Natl. Acad. Sci. U.S.A.">
        <title>Genome, transcriptome, and secretome analysis of wood decay fungus Postia placenta supports unique mechanisms of lignocellulose conversion.</title>
        <authorList>
            <person name="Martinez D."/>
            <person name="Challacombe J."/>
            <person name="Morgenstern I."/>
            <person name="Hibbett D."/>
            <person name="Schmoll M."/>
            <person name="Kubicek C.P."/>
            <person name="Ferreira P."/>
            <person name="Ruiz-Duenas F.J."/>
            <person name="Martinez A.T."/>
            <person name="Kersten P."/>
            <person name="Hammel K.E."/>
            <person name="Vanden Wymelenberg A."/>
            <person name="Gaskell J."/>
            <person name="Lindquist E."/>
            <person name="Sabat G."/>
            <person name="Splinter BonDurant S."/>
            <person name="Larrondo L.F."/>
            <person name="Canessa P."/>
            <person name="Vicuna R."/>
            <person name="Yadav J."/>
            <person name="Doddapaneni H."/>
            <person name="Subramanian V."/>
            <person name="Pisabarro A.G."/>
            <person name="Lavin J.L."/>
            <person name="Oguiza J.A."/>
            <person name="Master E."/>
            <person name="Henrissat B."/>
            <person name="Coutinho P.M."/>
            <person name="Harris P."/>
            <person name="Magnuson J.K."/>
            <person name="Baker S.E."/>
            <person name="Bruno K."/>
            <person name="Kenealy W."/>
            <person name="Hoegger P.J."/>
            <person name="Kuees U."/>
            <person name="Ramaiya P."/>
            <person name="Lucas S."/>
            <person name="Salamov A."/>
            <person name="Shapiro H."/>
            <person name="Tu H."/>
            <person name="Chee C.L."/>
            <person name="Misra M."/>
            <person name="Xie G."/>
            <person name="Teter S."/>
            <person name="Yaver D."/>
            <person name="James T."/>
            <person name="Mokrejs M."/>
            <person name="Pospisek M."/>
            <person name="Grigoriev I.V."/>
            <person name="Brettin T."/>
            <person name="Rokhsar D."/>
            <person name="Berka R."/>
            <person name="Cullen D."/>
        </authorList>
    </citation>
    <scope>NUCLEOTIDE SEQUENCE [LARGE SCALE GENOMIC DNA]</scope>
    <source>
        <strain>ATCC 44394 / Madison 698-R</strain>
    </source>
</reference>
<evidence type="ECO:0000255" key="1">
    <source>
        <dbReference type="HAMAP-Rule" id="MF_03122"/>
    </source>
</evidence>
<evidence type="ECO:0000305" key="2"/>
<comment type="subunit">
    <text evidence="1">Component of the small ribosomal subunit. Mature ribosomes consist of a small (40S) and a large (60S) subunit. The 40S subunit contains about 33 different proteins and 1 molecule of RNA (18S). The 60S subunit contains about 49 different proteins and 3 molecules of RNA (25S, 5.8S and 5S).</text>
</comment>
<comment type="subcellular location">
    <subcellularLocation>
        <location evidence="1">Cytoplasm</location>
    </subcellularLocation>
</comment>
<comment type="similarity">
    <text evidence="1">Belongs to the eukaryotic ribosomal protein eS1 family.</text>
</comment>
<organism>
    <name type="scientific">Postia placenta (strain ATCC 44394 / Madison 698-R)</name>
    <name type="common">Brown rot fungus</name>
    <name type="synonym">Poria monticola</name>
    <dbReference type="NCBI Taxonomy" id="561896"/>
    <lineage>
        <taxon>Eukaryota</taxon>
        <taxon>Fungi</taxon>
        <taxon>Dikarya</taxon>
        <taxon>Basidiomycota</taxon>
        <taxon>Agaricomycotina</taxon>
        <taxon>Agaricomycetes</taxon>
        <taxon>Polyporales</taxon>
        <taxon>Adustoporiaceae</taxon>
        <taxon>Rhodonia</taxon>
    </lineage>
</organism>
<keyword id="KW-0007">Acetylation</keyword>
<keyword id="KW-0963">Cytoplasm</keyword>
<keyword id="KW-0687">Ribonucleoprotein</keyword>
<keyword id="KW-0689">Ribosomal protein</keyword>
<proteinExistence type="inferred from homology"/>
<accession>B8PIG4</accession>